<keyword id="KW-0072">Autophagy</keyword>
<keyword id="KW-0963">Cytoplasm</keyword>
<keyword id="KW-0653">Protein transport</keyword>
<keyword id="KW-1185">Reference proteome</keyword>
<keyword id="KW-0813">Transport</keyword>
<comment type="function">
    <text evidence="1">Activates the ATG1 kinase in a nutritional condition dependent manner through the TOR pathway, leading to autophagy. Also involved in cytoplasm to vacuole transport (Cvt) and more specifically in Cvt vesicle formation. Seems to play a role in the switching machinery regulating the conversion between the Cvt pathway and autophagy. Finally, ATG13 is also required for glycogen storage during stationary phase (By similarity).</text>
</comment>
<comment type="subunit">
    <text evidence="1">Interacts with ATG1 to form the ATG1-ATG13 kinase complex.</text>
</comment>
<comment type="subcellular location">
    <subcellularLocation>
        <location evidence="2">Cytoplasm</location>
    </subcellularLocation>
    <subcellularLocation>
        <location evidence="2">Preautophagosomal structure</location>
    </subcellularLocation>
</comment>
<comment type="similarity">
    <text evidence="3">Belongs to the ATG13 family. Fungi subfamily.</text>
</comment>
<accession>A7TTE2</accession>
<dbReference type="EMBL" id="DS480562">
    <property type="protein sequence ID" value="EDO14469.1"/>
    <property type="molecule type" value="Genomic_DNA"/>
</dbReference>
<dbReference type="RefSeq" id="XP_001642327.1">
    <property type="nucleotide sequence ID" value="XM_001642277.1"/>
</dbReference>
<dbReference type="SMR" id="A7TTE2"/>
<dbReference type="FunCoup" id="A7TTE2">
    <property type="interactions" value="54"/>
</dbReference>
<dbReference type="STRING" id="436907.A7TTE2"/>
<dbReference type="GeneID" id="5542460"/>
<dbReference type="KEGG" id="vpo:Kpol_219p5"/>
<dbReference type="eggNOG" id="KOG4573">
    <property type="taxonomic scope" value="Eukaryota"/>
</dbReference>
<dbReference type="HOGENOM" id="CLU_411076_0_0_1"/>
<dbReference type="InParanoid" id="A7TTE2"/>
<dbReference type="OMA" id="WNVCKGT"/>
<dbReference type="OrthoDB" id="70161at2759"/>
<dbReference type="PhylomeDB" id="A7TTE2"/>
<dbReference type="Proteomes" id="UP000000267">
    <property type="component" value="Unassembled WGS sequence"/>
</dbReference>
<dbReference type="GO" id="GO:1990316">
    <property type="term" value="C:Atg1/ULK1 kinase complex"/>
    <property type="evidence" value="ECO:0007669"/>
    <property type="project" value="EnsemblFungi"/>
</dbReference>
<dbReference type="GO" id="GO:0005829">
    <property type="term" value="C:cytosol"/>
    <property type="evidence" value="ECO:0007669"/>
    <property type="project" value="TreeGrafter"/>
</dbReference>
<dbReference type="GO" id="GO:0070772">
    <property type="term" value="C:PAS complex"/>
    <property type="evidence" value="ECO:0007669"/>
    <property type="project" value="EnsemblFungi"/>
</dbReference>
<dbReference type="GO" id="GO:0000407">
    <property type="term" value="C:phagophore assembly site"/>
    <property type="evidence" value="ECO:0007669"/>
    <property type="project" value="UniProtKB-SubCell"/>
</dbReference>
<dbReference type="GO" id="GO:0120095">
    <property type="term" value="C:vacuole-isolation membrane contact site"/>
    <property type="evidence" value="ECO:0007669"/>
    <property type="project" value="EnsemblFungi"/>
</dbReference>
<dbReference type="GO" id="GO:0070016">
    <property type="term" value="F:armadillo repeat domain binding"/>
    <property type="evidence" value="ECO:0007669"/>
    <property type="project" value="EnsemblFungi"/>
</dbReference>
<dbReference type="GO" id="GO:0008289">
    <property type="term" value="F:lipid binding"/>
    <property type="evidence" value="ECO:0007669"/>
    <property type="project" value="EnsemblFungi"/>
</dbReference>
<dbReference type="GO" id="GO:0019887">
    <property type="term" value="F:protein kinase regulator activity"/>
    <property type="evidence" value="ECO:0007669"/>
    <property type="project" value="EnsemblFungi"/>
</dbReference>
<dbReference type="GO" id="GO:0006995">
    <property type="term" value="P:cellular response to nitrogen starvation"/>
    <property type="evidence" value="ECO:0007669"/>
    <property type="project" value="EnsemblFungi"/>
</dbReference>
<dbReference type="GO" id="GO:0071255">
    <property type="term" value="P:Cvt vesicle assembly"/>
    <property type="evidence" value="ECO:0007669"/>
    <property type="project" value="EnsemblFungi"/>
</dbReference>
<dbReference type="GO" id="GO:0000423">
    <property type="term" value="P:mitophagy"/>
    <property type="evidence" value="ECO:0007669"/>
    <property type="project" value="TreeGrafter"/>
</dbReference>
<dbReference type="GO" id="GO:0034727">
    <property type="term" value="P:piecemeal microautophagy of the nucleus"/>
    <property type="evidence" value="ECO:0007669"/>
    <property type="project" value="EnsemblFungi"/>
</dbReference>
<dbReference type="GO" id="GO:0010508">
    <property type="term" value="P:positive regulation of autophagy"/>
    <property type="evidence" value="ECO:0007669"/>
    <property type="project" value="EnsemblFungi"/>
</dbReference>
<dbReference type="GO" id="GO:0034497">
    <property type="term" value="P:protein localization to phagophore assembly site"/>
    <property type="evidence" value="ECO:0007669"/>
    <property type="project" value="EnsemblFungi"/>
</dbReference>
<dbReference type="GO" id="GO:0071211">
    <property type="term" value="P:protein targeting to vacuole involved in autophagy"/>
    <property type="evidence" value="ECO:0007669"/>
    <property type="project" value="EnsemblFungi"/>
</dbReference>
<dbReference type="GO" id="GO:0060341">
    <property type="term" value="P:regulation of cellular localization"/>
    <property type="evidence" value="ECO:0007669"/>
    <property type="project" value="EnsemblFungi"/>
</dbReference>
<dbReference type="Gene3D" id="6.10.140.1900">
    <property type="match status" value="1"/>
</dbReference>
<dbReference type="Gene3D" id="3.30.900.10">
    <property type="entry name" value="HORMA domain"/>
    <property type="match status" value="1"/>
</dbReference>
<dbReference type="InterPro" id="IPR040182">
    <property type="entry name" value="ATG13"/>
</dbReference>
<dbReference type="InterPro" id="IPR018731">
    <property type="entry name" value="Atg13_N"/>
</dbReference>
<dbReference type="InterPro" id="IPR036570">
    <property type="entry name" value="HORMA_dom_sf"/>
</dbReference>
<dbReference type="PANTHER" id="PTHR13430">
    <property type="match status" value="1"/>
</dbReference>
<dbReference type="PANTHER" id="PTHR13430:SF4">
    <property type="entry name" value="AUTOPHAGY-RELATED PROTEIN 13"/>
    <property type="match status" value="1"/>
</dbReference>
<dbReference type="Pfam" id="PF10033">
    <property type="entry name" value="ATG13"/>
    <property type="match status" value="1"/>
</dbReference>
<protein>
    <recommendedName>
        <fullName>Autophagy-related protein 13</fullName>
    </recommendedName>
</protein>
<proteinExistence type="inferred from homology"/>
<evidence type="ECO:0000250" key="1"/>
<evidence type="ECO:0000250" key="2">
    <source>
        <dbReference type="UniProtKB" id="Q06628"/>
    </source>
</evidence>
<evidence type="ECO:0000305" key="3"/>
<name>ATG13_VANPO</name>
<reference key="1">
    <citation type="journal article" date="2007" name="Proc. Natl. Acad. Sci. U.S.A.">
        <title>Independent sorting-out of thousands of duplicated gene pairs in two yeast species descended from a whole-genome duplication.</title>
        <authorList>
            <person name="Scannell D.R."/>
            <person name="Frank A.C."/>
            <person name="Conant G.C."/>
            <person name="Byrne K.P."/>
            <person name="Woolfit M."/>
            <person name="Wolfe K.H."/>
        </authorList>
    </citation>
    <scope>NUCLEOTIDE SEQUENCE [LARGE SCALE GENOMIC DNA]</scope>
    <source>
        <strain>ATCC 22028 / DSM 70294 / BCRC 21397 / CBS 2163 / NBRC 10782 / NRRL Y-8283 / UCD 57-17</strain>
    </source>
</reference>
<gene>
    <name type="primary">ATG13</name>
    <name type="ORF">Kpol_219p5</name>
</gene>
<sequence>MAPHNCDRELIDLIHNFFLRSTLLICSSKLNKNQHLLEEIQKFDSDLNEKPDLPKTINEWFHDENERNLPPLVIETLLDLKKLSPNHFVTLRDDDGNVWNVCKGTKKSEIVLERWLIELDNTSAAFQSYRGTIDSTGEIRKQIVLLARYLVTLIQILPSNELEENLTKNSTNLILSLKRKVIDGSKPILSKGRIGLSKPIISTYSNVINERNIPPHLEQRKITPVYTPLGLLRISVSFRHDCRFEVNQSTDSSDNVASNTTNIHQHLEPLHNKNYTNTSLSISPHSHIALASSSERNSIGKKDLNSKPIHPFKTGSVGSCTINQSQAMIRTTSNPSVIATLRAQRSRNDSISCQSQLEDIQLESTSVGSGSKYSSSFGRIRRHSSVKSSENVEKPIRLVKQSNAPTDDLLDFVKMMDEKQELRITKCNISSNNADISNSILRFQKLKSSNEILSEDLSMSVSLEGVNASMHRRSSVSHSPIPSVSPPVQYPSIPSRLSKTNLQEQDTFKTAVVSRRNSVEKSKINISQPKTTGRIENELVDKPLFNEEHESKGEELLASGIIGPSFKRSTSPHSIESVSSLISKTKIAFQQPSYYSHPTTAAVPAYAKLHRPSVLSTDVLSEDQNKKVVQDLNNNKDEDDELLFFMSDMNLSKI</sequence>
<organism>
    <name type="scientific">Vanderwaltozyma polyspora (strain ATCC 22028 / DSM 70294 / BCRC 21397 / CBS 2163 / NBRC 10782 / NRRL Y-8283 / UCD 57-17)</name>
    <name type="common">Kluyveromyces polysporus</name>
    <dbReference type="NCBI Taxonomy" id="436907"/>
    <lineage>
        <taxon>Eukaryota</taxon>
        <taxon>Fungi</taxon>
        <taxon>Dikarya</taxon>
        <taxon>Ascomycota</taxon>
        <taxon>Saccharomycotina</taxon>
        <taxon>Saccharomycetes</taxon>
        <taxon>Saccharomycetales</taxon>
        <taxon>Saccharomycetaceae</taxon>
        <taxon>Vanderwaltozyma</taxon>
    </lineage>
</organism>
<feature type="chain" id="PRO_0000317953" description="Autophagy-related protein 13">
    <location>
        <begin position="1"/>
        <end position="654"/>
    </location>
</feature>